<sequence>MAILIYALACAFGLGSWLAINGLWVELPIIVTTLPEGWELPSYLTVIIQLANLGPLLVTLMHKLCPGRLKESVVIYTILCIGVLACFLLAFFLGRDNCGGWGPAQRSLLHHYFLPGTSGLHLLSHLPALHDAAACPLHHHTEGGDTYVLQTQYLPPNFTTEVFFFFLAVMMCISLAAFWKLNRLPRTFEVSTENLVPDSVSSVCSGLDNPAVRTNSQKHLCEVTSQARPLLTKSGHSMFQLTFIYLMVVWVNGTTNGLLPSVQTYSCMPYGNLAYHLSAALASVANPVACIVAMFFPKRSLVFLGLLCVMGTGFASYNMAMAAMSPCPLLQKSALGEAIIVLSWVFFTGSLSYVKVMVGVILRDESHSALVWCGAAAQIGSLIGSVIMFPLINMYNLFQSGDTCSTKCPL</sequence>
<evidence type="ECO:0000250" key="1"/>
<evidence type="ECO:0000250" key="2">
    <source>
        <dbReference type="UniProtKB" id="Q9NQ40"/>
    </source>
</evidence>
<evidence type="ECO:0000255" key="3"/>
<evidence type="ECO:0000305" key="4"/>
<protein>
    <recommendedName>
        <fullName>Solute carrier family 52, riboflavin transporter, member 3</fullName>
    </recommendedName>
    <alternativeName>
        <fullName>Riboflavin transporter 2</fullName>
        <shortName>RFT2</shortName>
    </alternativeName>
</protein>
<reference key="1">
    <citation type="submission" date="2009-03" db="EMBL/GenBank/DDBJ databases">
        <title>Osmerus mordax full-length cDNAs.</title>
        <authorList>
            <person name="von Schalburg K."/>
            <person name="Leong J."/>
            <person name="Cooper G."/>
            <person name="Davidson W.S."/>
            <person name="Koop B.F."/>
        </authorList>
    </citation>
    <scope>NUCLEOTIDE SEQUENCE [LARGE SCALE MRNA]</scope>
    <source>
        <tissue>Brain</tissue>
    </source>
</reference>
<dbReference type="EMBL" id="BT075276">
    <property type="protein sequence ID" value="ACO09700.1"/>
    <property type="molecule type" value="mRNA"/>
</dbReference>
<dbReference type="SMR" id="C1BKZ7"/>
<dbReference type="GlyCosmos" id="C1BKZ7">
    <property type="glycosylation" value="1 site, No reported glycans"/>
</dbReference>
<dbReference type="GO" id="GO:0005886">
    <property type="term" value="C:plasma membrane"/>
    <property type="evidence" value="ECO:0007669"/>
    <property type="project" value="UniProtKB-SubCell"/>
</dbReference>
<dbReference type="GO" id="GO:0032217">
    <property type="term" value="F:riboflavin transmembrane transporter activity"/>
    <property type="evidence" value="ECO:0007669"/>
    <property type="project" value="InterPro"/>
</dbReference>
<dbReference type="InterPro" id="IPR009357">
    <property type="entry name" value="Riboflavin_transptr"/>
</dbReference>
<dbReference type="PANTHER" id="PTHR12929">
    <property type="entry name" value="SOLUTE CARRIER FAMILY 52"/>
    <property type="match status" value="1"/>
</dbReference>
<dbReference type="PANTHER" id="PTHR12929:SF4">
    <property type="entry name" value="SOLUTE CARRIER FAMILY 52, RIBOFLAVIN TRANSPORTER, MEMBER 3"/>
    <property type="match status" value="1"/>
</dbReference>
<dbReference type="Pfam" id="PF06237">
    <property type="entry name" value="SLC52_ribofla_tr"/>
    <property type="match status" value="2"/>
</dbReference>
<proteinExistence type="evidence at transcript level"/>
<keyword id="KW-1003">Cell membrane</keyword>
<keyword id="KW-0325">Glycoprotein</keyword>
<keyword id="KW-0472">Membrane</keyword>
<keyword id="KW-0812">Transmembrane</keyword>
<keyword id="KW-1133">Transmembrane helix</keyword>
<keyword id="KW-0813">Transport</keyword>
<name>S52A3_OSMMO</name>
<comment type="function">
    <text evidence="2">Plasma membrane transporter mediating the uptake by cells of the water soluble vitamin B2/riboflavin that plays a key role in biochemical oxidation-reduction reactions of the carbohydrate, lipid, and amino acid metabolism.</text>
</comment>
<comment type="catalytic activity">
    <reaction evidence="2">
        <text>riboflavin(in) = riboflavin(out)</text>
        <dbReference type="Rhea" id="RHEA:35015"/>
        <dbReference type="ChEBI" id="CHEBI:57986"/>
    </reaction>
</comment>
<comment type="subcellular location">
    <subcellularLocation>
        <location evidence="1">Cell membrane</location>
        <topology evidence="1">Multi-pass membrane protein</topology>
    </subcellularLocation>
</comment>
<comment type="similarity">
    <text evidence="4">Belongs to the riboflavin transporter family.</text>
</comment>
<gene>
    <name type="primary">slc52a3</name>
    <name type="synonym">rft2</name>
</gene>
<feature type="chain" id="PRO_0000399795" description="Solute carrier family 52, riboflavin transporter, member 3">
    <location>
        <begin position="1"/>
        <end position="410"/>
    </location>
</feature>
<feature type="transmembrane region" description="Helical" evidence="3">
    <location>
        <begin position="3"/>
        <end position="23"/>
    </location>
</feature>
<feature type="transmembrane region" description="Helical" evidence="3">
    <location>
        <begin position="40"/>
        <end position="60"/>
    </location>
</feature>
<feature type="transmembrane region" description="Helical" evidence="3">
    <location>
        <begin position="73"/>
        <end position="93"/>
    </location>
</feature>
<feature type="transmembrane region" description="Helical" evidence="3">
    <location>
        <begin position="158"/>
        <end position="178"/>
    </location>
</feature>
<feature type="transmembrane region" description="Helical" evidence="3">
    <location>
        <begin position="239"/>
        <end position="259"/>
    </location>
</feature>
<feature type="transmembrane region" description="Helical" evidence="3">
    <location>
        <begin position="277"/>
        <end position="297"/>
    </location>
</feature>
<feature type="transmembrane region" description="Helical" evidence="3">
    <location>
        <begin position="301"/>
        <end position="321"/>
    </location>
</feature>
<feature type="transmembrane region" description="Helical" evidence="3">
    <location>
        <begin position="334"/>
        <end position="354"/>
    </location>
</feature>
<feature type="transmembrane region" description="Helical" evidence="3">
    <location>
        <begin position="369"/>
        <end position="389"/>
    </location>
</feature>
<feature type="glycosylation site" description="N-linked (GlcNAc...) asparagine" evidence="3">
    <location>
        <position position="157"/>
    </location>
</feature>
<organism>
    <name type="scientific">Osmerus mordax</name>
    <name type="common">Rainbow smelt</name>
    <name type="synonym">Atherina mordax</name>
    <dbReference type="NCBI Taxonomy" id="8014"/>
    <lineage>
        <taxon>Eukaryota</taxon>
        <taxon>Metazoa</taxon>
        <taxon>Chordata</taxon>
        <taxon>Craniata</taxon>
        <taxon>Vertebrata</taxon>
        <taxon>Euteleostomi</taxon>
        <taxon>Actinopterygii</taxon>
        <taxon>Neopterygii</taxon>
        <taxon>Teleostei</taxon>
        <taxon>Stomiati</taxon>
        <taxon>Osmeriformes</taxon>
        <taxon>Osmeridae</taxon>
        <taxon>Osmerus</taxon>
    </lineage>
</organism>
<accession>C1BKZ7</accession>